<reference key="1">
    <citation type="submission" date="1998-10" db="UniProtKB">
        <authorList>
            <person name="Takahashi M."/>
            <person name="Quicke D.L.J."/>
        </authorList>
    </citation>
    <scope>PROTEIN SEQUENCE</scope>
    <source>
        <tissue>Larva</tissue>
    </source>
</reference>
<keyword id="KW-0903">Direct protein sequencing</keyword>
<name>MP2_MICOC</name>
<accession>P81533</accession>
<organism>
    <name type="scientific">Microplitis ocellatae</name>
    <name type="common">Braconid wasp</name>
    <dbReference type="NCBI Taxonomy" id="99573"/>
    <lineage>
        <taxon>Eukaryota</taxon>
        <taxon>Metazoa</taxon>
        <taxon>Ecdysozoa</taxon>
        <taxon>Arthropoda</taxon>
        <taxon>Hexapoda</taxon>
        <taxon>Insecta</taxon>
        <taxon>Pterygota</taxon>
        <taxon>Neoptera</taxon>
        <taxon>Endopterygota</taxon>
        <taxon>Hymenoptera</taxon>
        <taxon>Apocrita</taxon>
        <taxon>Ichneumonoidea</taxon>
        <taxon>Braconidae</taxon>
        <taxon>Microgastrinae</taxon>
        <taxon>Microplitis</taxon>
    </lineage>
</organism>
<proteinExistence type="evidence at protein level"/>
<feature type="chain" id="PRO_0000096548" description="MP2 protein">
    <location>
        <begin position="1"/>
        <end position="10" status="greater than"/>
    </location>
</feature>
<feature type="non-terminal residue">
    <location>
        <position position="10"/>
    </location>
</feature>
<protein>
    <recommendedName>
        <fullName>MP2 protein</fullName>
    </recommendedName>
</protein>
<sequence length="10" mass="1257">VYXXRQWLIG</sequence>
<comment type="tissue specificity">
    <text>Salivary glands.</text>
</comment>
<comment type="developmental stage">
    <text>Larval.</text>
</comment>